<keyword id="KW-0963">Cytoplasm</keyword>
<keyword id="KW-0251">Elongation factor</keyword>
<keyword id="KW-0648">Protein biosynthesis</keyword>
<evidence type="ECO:0000255" key="1">
    <source>
        <dbReference type="HAMAP-Rule" id="MF_00050"/>
    </source>
</evidence>
<protein>
    <recommendedName>
        <fullName evidence="1">Elongation factor Ts</fullName>
        <shortName evidence="1">EF-Ts</shortName>
    </recommendedName>
</protein>
<reference key="1">
    <citation type="journal article" date="2007" name="Genome Res.">
        <title>Reductive evolution and niche adaptation inferred from the genome of Mycobacterium ulcerans, the causative agent of Buruli ulcer.</title>
        <authorList>
            <person name="Stinear T.P."/>
            <person name="Seemann T."/>
            <person name="Pidot S."/>
            <person name="Frigui W."/>
            <person name="Reysset G."/>
            <person name="Garnier T."/>
            <person name="Meurice G."/>
            <person name="Simon D."/>
            <person name="Bouchier C."/>
            <person name="Ma L."/>
            <person name="Tichit M."/>
            <person name="Porter J.L."/>
            <person name="Ryan J."/>
            <person name="Johnson P.D.R."/>
            <person name="Davies J.K."/>
            <person name="Jenkin G.A."/>
            <person name="Small P.L.C."/>
            <person name="Jones L.M."/>
            <person name="Tekaia F."/>
            <person name="Laval F."/>
            <person name="Daffe M."/>
            <person name="Parkhill J."/>
            <person name="Cole S.T."/>
        </authorList>
    </citation>
    <scope>NUCLEOTIDE SEQUENCE [LARGE SCALE GENOMIC DNA]</scope>
    <source>
        <strain>Agy99</strain>
    </source>
</reference>
<organism>
    <name type="scientific">Mycobacterium ulcerans (strain Agy99)</name>
    <dbReference type="NCBI Taxonomy" id="362242"/>
    <lineage>
        <taxon>Bacteria</taxon>
        <taxon>Bacillati</taxon>
        <taxon>Actinomycetota</taxon>
        <taxon>Actinomycetes</taxon>
        <taxon>Mycobacteriales</taxon>
        <taxon>Mycobacteriaceae</taxon>
        <taxon>Mycobacterium</taxon>
        <taxon>Mycobacterium ulcerans group</taxon>
    </lineage>
</organism>
<name>EFTS_MYCUA</name>
<proteinExistence type="inferred from homology"/>
<comment type="function">
    <text evidence="1">Associates with the EF-Tu.GDP complex and induces the exchange of GDP to GTP. It remains bound to the aminoacyl-tRNA.EF-Tu.GTP complex up to the GTP hydrolysis stage on the ribosome.</text>
</comment>
<comment type="subcellular location">
    <subcellularLocation>
        <location evidence="1">Cytoplasm</location>
    </subcellularLocation>
</comment>
<comment type="similarity">
    <text evidence="1">Belongs to the EF-Ts family.</text>
</comment>
<feature type="chain" id="PRO_1000006133" description="Elongation factor Ts">
    <location>
        <begin position="1"/>
        <end position="271"/>
    </location>
</feature>
<feature type="region of interest" description="Involved in Mg(2+) ion dislocation from EF-Tu" evidence="1">
    <location>
        <begin position="76"/>
        <end position="79"/>
    </location>
</feature>
<accession>A0PQ80</accession>
<gene>
    <name evidence="1" type="primary">tsf</name>
    <name type="ordered locus">MUL_2068</name>
</gene>
<sequence>MANFTAADVKRLRELTGAGMLACKNALAESDGDFDKAVEALRIKGAKDVGKRAERATAEGLVAAKDGALIELNCETDFVAKNAEFQKLADDIVAAAVASKAADVDALKAASIGGQTVEEAIGALSAKIGEKLELRRVAIFGGTVETYLHRRAADLPPAVGVLVEYTGAGAEAAHAVALQIAALKARYLSREDVPEDLVASERRIAEETAKEEGKPEQALPKIVEGRLNGFFKDAVLLEQPSVSDSKKSVKALLDDAGVTVTQFVRFEVGQA</sequence>
<dbReference type="EMBL" id="CP000325">
    <property type="protein sequence ID" value="ABL04499.1"/>
    <property type="molecule type" value="Genomic_DNA"/>
</dbReference>
<dbReference type="RefSeq" id="WP_011740116.1">
    <property type="nucleotide sequence ID" value="NC_008611.1"/>
</dbReference>
<dbReference type="SMR" id="A0PQ80"/>
<dbReference type="GeneID" id="93436394"/>
<dbReference type="KEGG" id="mul:MUL_2068"/>
<dbReference type="eggNOG" id="COG0264">
    <property type="taxonomic scope" value="Bacteria"/>
</dbReference>
<dbReference type="HOGENOM" id="CLU_047155_0_0_11"/>
<dbReference type="Proteomes" id="UP000000765">
    <property type="component" value="Chromosome"/>
</dbReference>
<dbReference type="GO" id="GO:0005737">
    <property type="term" value="C:cytoplasm"/>
    <property type="evidence" value="ECO:0007669"/>
    <property type="project" value="UniProtKB-SubCell"/>
</dbReference>
<dbReference type="GO" id="GO:0003746">
    <property type="term" value="F:translation elongation factor activity"/>
    <property type="evidence" value="ECO:0007669"/>
    <property type="project" value="UniProtKB-UniRule"/>
</dbReference>
<dbReference type="CDD" id="cd14275">
    <property type="entry name" value="UBA_EF-Ts"/>
    <property type="match status" value="1"/>
</dbReference>
<dbReference type="FunFam" id="1.10.286.20:FF:000001">
    <property type="entry name" value="Elongation factor Ts"/>
    <property type="match status" value="1"/>
</dbReference>
<dbReference type="FunFam" id="1.10.8.10:FF:000001">
    <property type="entry name" value="Elongation factor Ts"/>
    <property type="match status" value="1"/>
</dbReference>
<dbReference type="Gene3D" id="1.10.286.20">
    <property type="match status" value="1"/>
</dbReference>
<dbReference type="Gene3D" id="1.10.8.10">
    <property type="entry name" value="DNA helicase RuvA subunit, C-terminal domain"/>
    <property type="match status" value="1"/>
</dbReference>
<dbReference type="Gene3D" id="3.30.479.20">
    <property type="entry name" value="Elongation factor Ts, dimerisation domain"/>
    <property type="match status" value="2"/>
</dbReference>
<dbReference type="HAMAP" id="MF_00050">
    <property type="entry name" value="EF_Ts"/>
    <property type="match status" value="1"/>
</dbReference>
<dbReference type="InterPro" id="IPR036402">
    <property type="entry name" value="EF-Ts_dimer_sf"/>
</dbReference>
<dbReference type="InterPro" id="IPR001816">
    <property type="entry name" value="Transl_elong_EFTs/EF1B"/>
</dbReference>
<dbReference type="InterPro" id="IPR014039">
    <property type="entry name" value="Transl_elong_EFTs/EF1B_dimer"/>
</dbReference>
<dbReference type="InterPro" id="IPR018101">
    <property type="entry name" value="Transl_elong_Ts_CS"/>
</dbReference>
<dbReference type="InterPro" id="IPR009060">
    <property type="entry name" value="UBA-like_sf"/>
</dbReference>
<dbReference type="NCBIfam" id="TIGR00116">
    <property type="entry name" value="tsf"/>
    <property type="match status" value="1"/>
</dbReference>
<dbReference type="PANTHER" id="PTHR11741">
    <property type="entry name" value="ELONGATION FACTOR TS"/>
    <property type="match status" value="1"/>
</dbReference>
<dbReference type="PANTHER" id="PTHR11741:SF0">
    <property type="entry name" value="ELONGATION FACTOR TS, MITOCHONDRIAL"/>
    <property type="match status" value="1"/>
</dbReference>
<dbReference type="Pfam" id="PF00889">
    <property type="entry name" value="EF_TS"/>
    <property type="match status" value="1"/>
</dbReference>
<dbReference type="SUPFAM" id="SSF54713">
    <property type="entry name" value="Elongation factor Ts (EF-Ts), dimerisation domain"/>
    <property type="match status" value="1"/>
</dbReference>
<dbReference type="SUPFAM" id="SSF46934">
    <property type="entry name" value="UBA-like"/>
    <property type="match status" value="1"/>
</dbReference>
<dbReference type="PROSITE" id="PS01126">
    <property type="entry name" value="EF_TS_1"/>
    <property type="match status" value="1"/>
</dbReference>
<dbReference type="PROSITE" id="PS01127">
    <property type="entry name" value="EF_TS_2"/>
    <property type="match status" value="1"/>
</dbReference>